<evidence type="ECO:0000255" key="1">
    <source>
        <dbReference type="HAMAP-Rule" id="MF_01227"/>
    </source>
</evidence>
<sequence length="547" mass="60555">MARYIFITGGVVSSLGKGLASAALGALLQARGFSVRLRKLDPYLNVDPGTMSPFEHGEVFVTDDGAETDLDLGHYERFTGVAARSTDSVSSGRIYSTVLEKERRGDYLGKTIQVIPHVTNEIKDFIAIGDDEVDFMLCEIGGTVGDIEGLPFFEAIRQFTHDKPRGQCIFMHLTLLPYLAASGELKTKPTQHSVKELQSIGIAPDILVCRSEHPIPEKEREKIALFCNVRKEAVVAAYDLKTIYDAPLAYHEQGLDQAVLDAFDISPAPKPDLTVWRDVSDRVHNPEGEVKVAIVGKYTQLEDAYKSIAEALTHGGMANRVKVIVEWVDAEVFDTQDVAPHLEGFHAILVPGGFGERGTEGKIKAAQYAREHNVPYLGICLGMQMAVIEAARNVANIKAAGSEEFDHEAGKKRFEPVVYHLKEWVQGNAKVSRRVGDDKGGTMRLGAYDAALTPGTRVADIYHTSAIDERHRHRYEVDIKYRAQLEDAGLVFSGMSPDGKLPEIIEWPNHPWFIGVQFHPELKSKPFDPHPLFADFIRAAKENSRLV</sequence>
<protein>
    <recommendedName>
        <fullName evidence="1">CTP synthase</fullName>
        <ecNumber evidence="1">6.3.4.2</ecNumber>
    </recommendedName>
    <alternativeName>
        <fullName evidence="1">Cytidine 5'-triphosphate synthase</fullName>
    </alternativeName>
    <alternativeName>
        <fullName evidence="1">Cytidine triphosphate synthetase</fullName>
        <shortName evidence="1">CTP synthetase</shortName>
        <shortName evidence="1">CTPS</shortName>
    </alternativeName>
    <alternativeName>
        <fullName evidence="1">UTP--ammonia ligase</fullName>
    </alternativeName>
</protein>
<accession>Q168S7</accession>
<name>PYRG_ROSDO</name>
<dbReference type="EC" id="6.3.4.2" evidence="1"/>
<dbReference type="EMBL" id="CP000362">
    <property type="protein sequence ID" value="ABG31516.1"/>
    <property type="molecule type" value="Genomic_DNA"/>
</dbReference>
<dbReference type="RefSeq" id="WP_011568133.1">
    <property type="nucleotide sequence ID" value="NC_008209.1"/>
</dbReference>
<dbReference type="SMR" id="Q168S7"/>
<dbReference type="STRING" id="375451.RD1_1906"/>
<dbReference type="KEGG" id="rde:RD1_1906"/>
<dbReference type="eggNOG" id="COG0504">
    <property type="taxonomic scope" value="Bacteria"/>
</dbReference>
<dbReference type="HOGENOM" id="CLU_011675_5_0_5"/>
<dbReference type="OrthoDB" id="9801107at2"/>
<dbReference type="UniPathway" id="UPA00159">
    <property type="reaction ID" value="UER00277"/>
</dbReference>
<dbReference type="Proteomes" id="UP000007029">
    <property type="component" value="Chromosome"/>
</dbReference>
<dbReference type="GO" id="GO:0005829">
    <property type="term" value="C:cytosol"/>
    <property type="evidence" value="ECO:0007669"/>
    <property type="project" value="TreeGrafter"/>
</dbReference>
<dbReference type="GO" id="GO:0005524">
    <property type="term" value="F:ATP binding"/>
    <property type="evidence" value="ECO:0007669"/>
    <property type="project" value="UniProtKB-KW"/>
</dbReference>
<dbReference type="GO" id="GO:0003883">
    <property type="term" value="F:CTP synthase activity"/>
    <property type="evidence" value="ECO:0007669"/>
    <property type="project" value="UniProtKB-UniRule"/>
</dbReference>
<dbReference type="GO" id="GO:0004359">
    <property type="term" value="F:glutaminase activity"/>
    <property type="evidence" value="ECO:0007669"/>
    <property type="project" value="RHEA"/>
</dbReference>
<dbReference type="GO" id="GO:0042802">
    <property type="term" value="F:identical protein binding"/>
    <property type="evidence" value="ECO:0007669"/>
    <property type="project" value="TreeGrafter"/>
</dbReference>
<dbReference type="GO" id="GO:0046872">
    <property type="term" value="F:metal ion binding"/>
    <property type="evidence" value="ECO:0007669"/>
    <property type="project" value="UniProtKB-KW"/>
</dbReference>
<dbReference type="GO" id="GO:0044210">
    <property type="term" value="P:'de novo' CTP biosynthetic process"/>
    <property type="evidence" value="ECO:0007669"/>
    <property type="project" value="UniProtKB-UniRule"/>
</dbReference>
<dbReference type="GO" id="GO:0019856">
    <property type="term" value="P:pyrimidine nucleobase biosynthetic process"/>
    <property type="evidence" value="ECO:0007669"/>
    <property type="project" value="TreeGrafter"/>
</dbReference>
<dbReference type="CDD" id="cd03113">
    <property type="entry name" value="CTPS_N"/>
    <property type="match status" value="1"/>
</dbReference>
<dbReference type="CDD" id="cd01746">
    <property type="entry name" value="GATase1_CTP_Synthase"/>
    <property type="match status" value="1"/>
</dbReference>
<dbReference type="FunFam" id="3.40.50.300:FF:000009">
    <property type="entry name" value="CTP synthase"/>
    <property type="match status" value="1"/>
</dbReference>
<dbReference type="FunFam" id="3.40.50.880:FF:000002">
    <property type="entry name" value="CTP synthase"/>
    <property type="match status" value="1"/>
</dbReference>
<dbReference type="Gene3D" id="3.40.50.880">
    <property type="match status" value="1"/>
</dbReference>
<dbReference type="Gene3D" id="3.40.50.300">
    <property type="entry name" value="P-loop containing nucleotide triphosphate hydrolases"/>
    <property type="match status" value="1"/>
</dbReference>
<dbReference type="HAMAP" id="MF_01227">
    <property type="entry name" value="PyrG"/>
    <property type="match status" value="1"/>
</dbReference>
<dbReference type="InterPro" id="IPR029062">
    <property type="entry name" value="Class_I_gatase-like"/>
</dbReference>
<dbReference type="InterPro" id="IPR004468">
    <property type="entry name" value="CTP_synthase"/>
</dbReference>
<dbReference type="InterPro" id="IPR017456">
    <property type="entry name" value="CTP_synthase_N"/>
</dbReference>
<dbReference type="InterPro" id="IPR017926">
    <property type="entry name" value="GATASE"/>
</dbReference>
<dbReference type="InterPro" id="IPR033828">
    <property type="entry name" value="GATase1_CTP_Synthase"/>
</dbReference>
<dbReference type="InterPro" id="IPR027417">
    <property type="entry name" value="P-loop_NTPase"/>
</dbReference>
<dbReference type="NCBIfam" id="NF003792">
    <property type="entry name" value="PRK05380.1"/>
    <property type="match status" value="1"/>
</dbReference>
<dbReference type="NCBIfam" id="TIGR00337">
    <property type="entry name" value="PyrG"/>
    <property type="match status" value="1"/>
</dbReference>
<dbReference type="PANTHER" id="PTHR11550">
    <property type="entry name" value="CTP SYNTHASE"/>
    <property type="match status" value="1"/>
</dbReference>
<dbReference type="PANTHER" id="PTHR11550:SF0">
    <property type="entry name" value="CTP SYNTHASE-RELATED"/>
    <property type="match status" value="1"/>
</dbReference>
<dbReference type="Pfam" id="PF06418">
    <property type="entry name" value="CTP_synth_N"/>
    <property type="match status" value="1"/>
</dbReference>
<dbReference type="Pfam" id="PF00117">
    <property type="entry name" value="GATase"/>
    <property type="match status" value="1"/>
</dbReference>
<dbReference type="SUPFAM" id="SSF52317">
    <property type="entry name" value="Class I glutamine amidotransferase-like"/>
    <property type="match status" value="1"/>
</dbReference>
<dbReference type="SUPFAM" id="SSF52540">
    <property type="entry name" value="P-loop containing nucleoside triphosphate hydrolases"/>
    <property type="match status" value="1"/>
</dbReference>
<dbReference type="PROSITE" id="PS51273">
    <property type="entry name" value="GATASE_TYPE_1"/>
    <property type="match status" value="1"/>
</dbReference>
<comment type="function">
    <text evidence="1">Catalyzes the ATP-dependent amination of UTP to CTP with either L-glutamine or ammonia as the source of nitrogen. Regulates intracellular CTP levels through interactions with the four ribonucleotide triphosphates.</text>
</comment>
<comment type="catalytic activity">
    <reaction evidence="1">
        <text>UTP + L-glutamine + ATP + H2O = CTP + L-glutamate + ADP + phosphate + 2 H(+)</text>
        <dbReference type="Rhea" id="RHEA:26426"/>
        <dbReference type="ChEBI" id="CHEBI:15377"/>
        <dbReference type="ChEBI" id="CHEBI:15378"/>
        <dbReference type="ChEBI" id="CHEBI:29985"/>
        <dbReference type="ChEBI" id="CHEBI:30616"/>
        <dbReference type="ChEBI" id="CHEBI:37563"/>
        <dbReference type="ChEBI" id="CHEBI:43474"/>
        <dbReference type="ChEBI" id="CHEBI:46398"/>
        <dbReference type="ChEBI" id="CHEBI:58359"/>
        <dbReference type="ChEBI" id="CHEBI:456216"/>
        <dbReference type="EC" id="6.3.4.2"/>
    </reaction>
</comment>
<comment type="catalytic activity">
    <reaction evidence="1">
        <text>L-glutamine + H2O = L-glutamate + NH4(+)</text>
        <dbReference type="Rhea" id="RHEA:15889"/>
        <dbReference type="ChEBI" id="CHEBI:15377"/>
        <dbReference type="ChEBI" id="CHEBI:28938"/>
        <dbReference type="ChEBI" id="CHEBI:29985"/>
        <dbReference type="ChEBI" id="CHEBI:58359"/>
    </reaction>
</comment>
<comment type="catalytic activity">
    <reaction evidence="1">
        <text>UTP + NH4(+) + ATP = CTP + ADP + phosphate + 2 H(+)</text>
        <dbReference type="Rhea" id="RHEA:16597"/>
        <dbReference type="ChEBI" id="CHEBI:15378"/>
        <dbReference type="ChEBI" id="CHEBI:28938"/>
        <dbReference type="ChEBI" id="CHEBI:30616"/>
        <dbReference type="ChEBI" id="CHEBI:37563"/>
        <dbReference type="ChEBI" id="CHEBI:43474"/>
        <dbReference type="ChEBI" id="CHEBI:46398"/>
        <dbReference type="ChEBI" id="CHEBI:456216"/>
    </reaction>
</comment>
<comment type="activity regulation">
    <text evidence="1">Allosterically activated by GTP, when glutamine is the substrate; GTP has no effect on the reaction when ammonia is the substrate. The allosteric effector GTP functions by stabilizing the protein conformation that binds the tetrahedral intermediate(s) formed during glutamine hydrolysis. Inhibited by the product CTP, via allosteric rather than competitive inhibition.</text>
</comment>
<comment type="pathway">
    <text evidence="1">Pyrimidine metabolism; CTP biosynthesis via de novo pathway; CTP from UDP: step 2/2.</text>
</comment>
<comment type="subunit">
    <text evidence="1">Homotetramer.</text>
</comment>
<comment type="miscellaneous">
    <text evidence="1">CTPSs have evolved a hybrid strategy for distinguishing between UTP and CTP. The overlapping regions of the product feedback inhibitory and substrate sites recognize a common feature in both compounds, the triphosphate moiety. To differentiate isosteric substrate and product pyrimidine rings, an additional pocket far from the expected kinase/ligase catalytic site, specifically recognizes the cytosine and ribose portions of the product inhibitor.</text>
</comment>
<comment type="similarity">
    <text evidence="1">Belongs to the CTP synthase family.</text>
</comment>
<organism>
    <name type="scientific">Roseobacter denitrificans (strain ATCC 33942 / OCh 114)</name>
    <name type="common">Erythrobacter sp. (strain OCh 114)</name>
    <name type="synonym">Roseobacter denitrificans</name>
    <dbReference type="NCBI Taxonomy" id="375451"/>
    <lineage>
        <taxon>Bacteria</taxon>
        <taxon>Pseudomonadati</taxon>
        <taxon>Pseudomonadota</taxon>
        <taxon>Alphaproteobacteria</taxon>
        <taxon>Rhodobacterales</taxon>
        <taxon>Roseobacteraceae</taxon>
        <taxon>Roseobacter</taxon>
    </lineage>
</organism>
<reference key="1">
    <citation type="journal article" date="2007" name="J. Bacteriol.">
        <title>The complete genome sequence of Roseobacter denitrificans reveals a mixotrophic rather than photosynthetic metabolism.</title>
        <authorList>
            <person name="Swingley W.D."/>
            <person name="Sadekar S."/>
            <person name="Mastrian S.D."/>
            <person name="Matthies H.J."/>
            <person name="Hao J."/>
            <person name="Ramos H."/>
            <person name="Acharya C.R."/>
            <person name="Conrad A.L."/>
            <person name="Taylor H.L."/>
            <person name="Dejesa L.C."/>
            <person name="Shah M.K."/>
            <person name="O'Huallachain M.E."/>
            <person name="Lince M.T."/>
            <person name="Blankenship R.E."/>
            <person name="Beatty J.T."/>
            <person name="Touchman J.W."/>
        </authorList>
    </citation>
    <scope>NUCLEOTIDE SEQUENCE [LARGE SCALE GENOMIC DNA]</scope>
    <source>
        <strain>ATCC 33942 / OCh 114</strain>
    </source>
</reference>
<feature type="chain" id="PRO_0000266206" description="CTP synthase">
    <location>
        <begin position="1"/>
        <end position="547"/>
    </location>
</feature>
<feature type="domain" description="Glutamine amidotransferase type-1" evidence="1">
    <location>
        <begin position="291"/>
        <end position="546"/>
    </location>
</feature>
<feature type="region of interest" description="Amidoligase domain" evidence="1">
    <location>
        <begin position="1"/>
        <end position="265"/>
    </location>
</feature>
<feature type="active site" description="Nucleophile; for glutamine hydrolysis" evidence="1">
    <location>
        <position position="380"/>
    </location>
</feature>
<feature type="active site" evidence="1">
    <location>
        <position position="519"/>
    </location>
</feature>
<feature type="active site" evidence="1">
    <location>
        <position position="521"/>
    </location>
</feature>
<feature type="binding site" evidence="1">
    <location>
        <position position="13"/>
    </location>
    <ligand>
        <name>CTP</name>
        <dbReference type="ChEBI" id="CHEBI:37563"/>
        <note>allosteric inhibitor</note>
    </ligand>
</feature>
<feature type="binding site" evidence="1">
    <location>
        <position position="13"/>
    </location>
    <ligand>
        <name>UTP</name>
        <dbReference type="ChEBI" id="CHEBI:46398"/>
    </ligand>
</feature>
<feature type="binding site" evidence="1">
    <location>
        <begin position="14"/>
        <end position="19"/>
    </location>
    <ligand>
        <name>ATP</name>
        <dbReference type="ChEBI" id="CHEBI:30616"/>
    </ligand>
</feature>
<feature type="binding site" evidence="1">
    <location>
        <position position="71"/>
    </location>
    <ligand>
        <name>ATP</name>
        <dbReference type="ChEBI" id="CHEBI:30616"/>
    </ligand>
</feature>
<feature type="binding site" evidence="1">
    <location>
        <position position="71"/>
    </location>
    <ligand>
        <name>Mg(2+)</name>
        <dbReference type="ChEBI" id="CHEBI:18420"/>
    </ligand>
</feature>
<feature type="binding site" evidence="1">
    <location>
        <position position="139"/>
    </location>
    <ligand>
        <name>Mg(2+)</name>
        <dbReference type="ChEBI" id="CHEBI:18420"/>
    </ligand>
</feature>
<feature type="binding site" evidence="1">
    <location>
        <begin position="146"/>
        <end position="148"/>
    </location>
    <ligand>
        <name>CTP</name>
        <dbReference type="ChEBI" id="CHEBI:37563"/>
        <note>allosteric inhibitor</note>
    </ligand>
</feature>
<feature type="binding site" evidence="1">
    <location>
        <begin position="186"/>
        <end position="191"/>
    </location>
    <ligand>
        <name>CTP</name>
        <dbReference type="ChEBI" id="CHEBI:37563"/>
        <note>allosteric inhibitor</note>
    </ligand>
</feature>
<feature type="binding site" evidence="1">
    <location>
        <begin position="186"/>
        <end position="191"/>
    </location>
    <ligand>
        <name>UTP</name>
        <dbReference type="ChEBI" id="CHEBI:46398"/>
    </ligand>
</feature>
<feature type="binding site" evidence="1">
    <location>
        <position position="222"/>
    </location>
    <ligand>
        <name>CTP</name>
        <dbReference type="ChEBI" id="CHEBI:37563"/>
        <note>allosteric inhibitor</note>
    </ligand>
</feature>
<feature type="binding site" evidence="1">
    <location>
        <position position="222"/>
    </location>
    <ligand>
        <name>UTP</name>
        <dbReference type="ChEBI" id="CHEBI:46398"/>
    </ligand>
</feature>
<feature type="binding site" evidence="1">
    <location>
        <position position="353"/>
    </location>
    <ligand>
        <name>L-glutamine</name>
        <dbReference type="ChEBI" id="CHEBI:58359"/>
    </ligand>
</feature>
<feature type="binding site" evidence="1">
    <location>
        <begin position="381"/>
        <end position="384"/>
    </location>
    <ligand>
        <name>L-glutamine</name>
        <dbReference type="ChEBI" id="CHEBI:58359"/>
    </ligand>
</feature>
<feature type="binding site" evidence="1">
    <location>
        <position position="404"/>
    </location>
    <ligand>
        <name>L-glutamine</name>
        <dbReference type="ChEBI" id="CHEBI:58359"/>
    </ligand>
</feature>
<feature type="binding site" evidence="1">
    <location>
        <position position="474"/>
    </location>
    <ligand>
        <name>L-glutamine</name>
        <dbReference type="ChEBI" id="CHEBI:58359"/>
    </ligand>
</feature>
<keyword id="KW-0067">ATP-binding</keyword>
<keyword id="KW-0315">Glutamine amidotransferase</keyword>
<keyword id="KW-0436">Ligase</keyword>
<keyword id="KW-0460">Magnesium</keyword>
<keyword id="KW-0479">Metal-binding</keyword>
<keyword id="KW-0547">Nucleotide-binding</keyword>
<keyword id="KW-0665">Pyrimidine biosynthesis</keyword>
<keyword id="KW-1185">Reference proteome</keyword>
<gene>
    <name evidence="1" type="primary">pyrG</name>
    <name type="ordered locus">RD1_1906</name>
</gene>
<proteinExistence type="inferred from homology"/>